<feature type="chain" id="PRO_0000170260" description="Large ribosomal subunit protein bL33">
    <location>
        <begin position="1"/>
        <end position="53"/>
    </location>
</feature>
<evidence type="ECO:0000305" key="1"/>
<keyword id="KW-1185">Reference proteome</keyword>
<keyword id="KW-0687">Ribonucleoprotein</keyword>
<keyword id="KW-0689">Ribosomal protein</keyword>
<organism>
    <name type="scientific">Ureaplasma parvum serovar 3 (strain ATCC 700970)</name>
    <dbReference type="NCBI Taxonomy" id="273119"/>
    <lineage>
        <taxon>Bacteria</taxon>
        <taxon>Bacillati</taxon>
        <taxon>Mycoplasmatota</taxon>
        <taxon>Mycoplasmoidales</taxon>
        <taxon>Mycoplasmoidaceae</taxon>
        <taxon>Ureaplasma</taxon>
    </lineage>
</organism>
<gene>
    <name type="primary">rpmG</name>
    <name type="synonym">rpl33</name>
    <name type="ordered locus">UU533</name>
</gene>
<protein>
    <recommendedName>
        <fullName evidence="1">Large ribosomal subunit protein bL33</fullName>
    </recommendedName>
    <alternativeName>
        <fullName>50S ribosomal protein L33</fullName>
    </alternativeName>
</protein>
<accession>Q9PPV7</accession>
<proteinExistence type="inferred from homology"/>
<reference key="1">
    <citation type="journal article" date="2000" name="Nature">
        <title>The complete sequence of the mucosal pathogen Ureaplasma urealyticum.</title>
        <authorList>
            <person name="Glass J.I."/>
            <person name="Lefkowitz E.J."/>
            <person name="Glass J.S."/>
            <person name="Heiner C.R."/>
            <person name="Chen E.Y."/>
            <person name="Cassell G.H."/>
        </authorList>
    </citation>
    <scope>NUCLEOTIDE SEQUENCE [LARGE SCALE GENOMIC DNA]</scope>
    <source>
        <strain>ATCC 700970</strain>
    </source>
</reference>
<sequence>MAIKRGVRLQCNESKSINYITTKNAKNNPDRLSLNKFCPKCRKVTTHVEIKKK</sequence>
<comment type="similarity">
    <text evidence="1">Belongs to the bacterial ribosomal protein bL33 family.</text>
</comment>
<dbReference type="EMBL" id="AF222894">
    <property type="protein sequence ID" value="AAF30946.1"/>
    <property type="molecule type" value="Genomic_DNA"/>
</dbReference>
<dbReference type="RefSeq" id="WP_006688661.1">
    <property type="nucleotide sequence ID" value="NC_002162.1"/>
</dbReference>
<dbReference type="SMR" id="Q9PPV7"/>
<dbReference type="STRING" id="273119.UU533"/>
<dbReference type="EnsemblBacteria" id="AAF30946">
    <property type="protein sequence ID" value="AAF30946"/>
    <property type="gene ID" value="UU533"/>
</dbReference>
<dbReference type="GeneID" id="29672398"/>
<dbReference type="KEGG" id="uur:UU533"/>
<dbReference type="eggNOG" id="COG0267">
    <property type="taxonomic scope" value="Bacteria"/>
</dbReference>
<dbReference type="HOGENOM" id="CLU_190949_0_2_14"/>
<dbReference type="OrthoDB" id="9801333at2"/>
<dbReference type="Proteomes" id="UP000000423">
    <property type="component" value="Chromosome"/>
</dbReference>
<dbReference type="GO" id="GO:0005737">
    <property type="term" value="C:cytoplasm"/>
    <property type="evidence" value="ECO:0007669"/>
    <property type="project" value="UniProtKB-ARBA"/>
</dbReference>
<dbReference type="GO" id="GO:1990904">
    <property type="term" value="C:ribonucleoprotein complex"/>
    <property type="evidence" value="ECO:0007669"/>
    <property type="project" value="UniProtKB-KW"/>
</dbReference>
<dbReference type="GO" id="GO:0005840">
    <property type="term" value="C:ribosome"/>
    <property type="evidence" value="ECO:0007669"/>
    <property type="project" value="UniProtKB-KW"/>
</dbReference>
<dbReference type="GO" id="GO:0003735">
    <property type="term" value="F:structural constituent of ribosome"/>
    <property type="evidence" value="ECO:0007669"/>
    <property type="project" value="InterPro"/>
</dbReference>
<dbReference type="GO" id="GO:0006412">
    <property type="term" value="P:translation"/>
    <property type="evidence" value="ECO:0007669"/>
    <property type="project" value="UniProtKB-UniRule"/>
</dbReference>
<dbReference type="Gene3D" id="2.20.28.120">
    <property type="entry name" value="Ribosomal protein L33"/>
    <property type="match status" value="1"/>
</dbReference>
<dbReference type="HAMAP" id="MF_00294">
    <property type="entry name" value="Ribosomal_bL33"/>
    <property type="match status" value="1"/>
</dbReference>
<dbReference type="InterPro" id="IPR001705">
    <property type="entry name" value="Ribosomal_bL33"/>
</dbReference>
<dbReference type="InterPro" id="IPR018264">
    <property type="entry name" value="Ribosomal_bL33_CS"/>
</dbReference>
<dbReference type="InterPro" id="IPR038584">
    <property type="entry name" value="Ribosomal_bL33_sf"/>
</dbReference>
<dbReference type="InterPro" id="IPR011332">
    <property type="entry name" value="Ribosomal_zn-bd"/>
</dbReference>
<dbReference type="NCBIfam" id="NF001764">
    <property type="entry name" value="PRK00504.1"/>
    <property type="match status" value="1"/>
</dbReference>
<dbReference type="NCBIfam" id="NF001860">
    <property type="entry name" value="PRK00595.1"/>
    <property type="match status" value="1"/>
</dbReference>
<dbReference type="NCBIfam" id="TIGR01023">
    <property type="entry name" value="rpmG_bact"/>
    <property type="match status" value="1"/>
</dbReference>
<dbReference type="PANTHER" id="PTHR43168">
    <property type="entry name" value="50S RIBOSOMAL PROTEIN L33, CHLOROPLASTIC"/>
    <property type="match status" value="1"/>
</dbReference>
<dbReference type="PANTHER" id="PTHR43168:SF6">
    <property type="entry name" value="LARGE RIBOSOMAL SUBUNIT PROTEIN BL33A"/>
    <property type="match status" value="1"/>
</dbReference>
<dbReference type="Pfam" id="PF00471">
    <property type="entry name" value="Ribosomal_L33"/>
    <property type="match status" value="1"/>
</dbReference>
<dbReference type="SUPFAM" id="SSF57829">
    <property type="entry name" value="Zn-binding ribosomal proteins"/>
    <property type="match status" value="1"/>
</dbReference>
<dbReference type="PROSITE" id="PS00582">
    <property type="entry name" value="RIBOSOMAL_L33"/>
    <property type="match status" value="1"/>
</dbReference>
<name>RL33_UREPA</name>